<proteinExistence type="inferred from homology"/>
<name>QUEC_CAMJE</name>
<accession>P0C634</accession>
<accession>Q0PCA9</accession>
<accession>Q3HR23</accession>
<accession>Q9PJ95</accession>
<keyword id="KW-0067">ATP-binding</keyword>
<keyword id="KW-0436">Ligase</keyword>
<keyword id="KW-0479">Metal-binding</keyword>
<keyword id="KW-0547">Nucleotide-binding</keyword>
<keyword id="KW-0671">Queuosine biosynthesis</keyword>
<keyword id="KW-1185">Reference proteome</keyword>
<keyword id="KW-0862">Zinc</keyword>
<evidence type="ECO:0000255" key="1">
    <source>
        <dbReference type="HAMAP-Rule" id="MF_01633"/>
    </source>
</evidence>
<organism>
    <name type="scientific">Campylobacter jejuni subsp. jejuni serotype O:2 (strain ATCC 700819 / NCTC 11168)</name>
    <dbReference type="NCBI Taxonomy" id="192222"/>
    <lineage>
        <taxon>Bacteria</taxon>
        <taxon>Pseudomonadati</taxon>
        <taxon>Campylobacterota</taxon>
        <taxon>Epsilonproteobacteria</taxon>
        <taxon>Campylobacterales</taxon>
        <taxon>Campylobacteraceae</taxon>
        <taxon>Campylobacter</taxon>
    </lineage>
</organism>
<dbReference type="EC" id="6.3.4.20" evidence="1"/>
<dbReference type="EMBL" id="AL111168">
    <property type="protein sequence ID" value="CAL34197.1"/>
    <property type="molecule type" value="Genomic_DNA"/>
</dbReference>
<dbReference type="PIR" id="C81417">
    <property type="entry name" value="C81417"/>
</dbReference>
<dbReference type="RefSeq" id="WP_002779268.1">
    <property type="nucleotide sequence ID" value="NZ_SZUC01000002.1"/>
</dbReference>
<dbReference type="RefSeq" id="YP_002343488.1">
    <property type="nucleotide sequence ID" value="NC_002163.1"/>
</dbReference>
<dbReference type="SMR" id="P0C634"/>
<dbReference type="IntAct" id="P0C634">
    <property type="interactions" value="22"/>
</dbReference>
<dbReference type="STRING" id="192222.Cj0016"/>
<dbReference type="PaxDb" id="192222-Cj0016"/>
<dbReference type="EnsemblBacteria" id="CAL34197">
    <property type="protein sequence ID" value="CAL34197"/>
    <property type="gene ID" value="Cj0016"/>
</dbReference>
<dbReference type="GeneID" id="66544985"/>
<dbReference type="GeneID" id="904353"/>
<dbReference type="KEGG" id="cje:Cj0016"/>
<dbReference type="PATRIC" id="fig|192222.6.peg.16"/>
<dbReference type="eggNOG" id="COG0603">
    <property type="taxonomic scope" value="Bacteria"/>
</dbReference>
<dbReference type="HOGENOM" id="CLU_081854_1_0_7"/>
<dbReference type="OrthoDB" id="9789567at2"/>
<dbReference type="UniPathway" id="UPA00391"/>
<dbReference type="Proteomes" id="UP000000799">
    <property type="component" value="Chromosome"/>
</dbReference>
<dbReference type="GO" id="GO:0005524">
    <property type="term" value="F:ATP binding"/>
    <property type="evidence" value="ECO:0007669"/>
    <property type="project" value="UniProtKB-UniRule"/>
</dbReference>
<dbReference type="GO" id="GO:0016879">
    <property type="term" value="F:ligase activity, forming carbon-nitrogen bonds"/>
    <property type="evidence" value="ECO:0007669"/>
    <property type="project" value="UniProtKB-UniRule"/>
</dbReference>
<dbReference type="GO" id="GO:0008270">
    <property type="term" value="F:zinc ion binding"/>
    <property type="evidence" value="ECO:0007669"/>
    <property type="project" value="UniProtKB-UniRule"/>
</dbReference>
<dbReference type="GO" id="GO:0008616">
    <property type="term" value="P:queuosine biosynthetic process"/>
    <property type="evidence" value="ECO:0007669"/>
    <property type="project" value="UniProtKB-UniRule"/>
</dbReference>
<dbReference type="CDD" id="cd01995">
    <property type="entry name" value="QueC-like"/>
    <property type="match status" value="1"/>
</dbReference>
<dbReference type="Gene3D" id="3.40.50.620">
    <property type="entry name" value="HUPs"/>
    <property type="match status" value="1"/>
</dbReference>
<dbReference type="HAMAP" id="MF_01633">
    <property type="entry name" value="QueC"/>
    <property type="match status" value="1"/>
</dbReference>
<dbReference type="InterPro" id="IPR018317">
    <property type="entry name" value="QueC"/>
</dbReference>
<dbReference type="InterPro" id="IPR014729">
    <property type="entry name" value="Rossmann-like_a/b/a_fold"/>
</dbReference>
<dbReference type="NCBIfam" id="TIGR00364">
    <property type="entry name" value="7-cyano-7-deazaguanine synthase QueC"/>
    <property type="match status" value="1"/>
</dbReference>
<dbReference type="PANTHER" id="PTHR42914">
    <property type="entry name" value="7-CYANO-7-DEAZAGUANINE SYNTHASE"/>
    <property type="match status" value="1"/>
</dbReference>
<dbReference type="PANTHER" id="PTHR42914:SF1">
    <property type="entry name" value="7-CYANO-7-DEAZAGUANINE SYNTHASE"/>
    <property type="match status" value="1"/>
</dbReference>
<dbReference type="Pfam" id="PF06508">
    <property type="entry name" value="QueC"/>
    <property type="match status" value="1"/>
</dbReference>
<dbReference type="PIRSF" id="PIRSF006293">
    <property type="entry name" value="ExsB"/>
    <property type="match status" value="1"/>
</dbReference>
<dbReference type="SUPFAM" id="SSF52402">
    <property type="entry name" value="Adenine nucleotide alpha hydrolases-like"/>
    <property type="match status" value="1"/>
</dbReference>
<reference key="1">
    <citation type="journal article" date="2000" name="Nature">
        <title>The genome sequence of the food-borne pathogen Campylobacter jejuni reveals hypervariable sequences.</title>
        <authorList>
            <person name="Parkhill J."/>
            <person name="Wren B.W."/>
            <person name="Mungall K.L."/>
            <person name="Ketley J.M."/>
            <person name="Churcher C.M."/>
            <person name="Basham D."/>
            <person name="Chillingworth T."/>
            <person name="Davies R.M."/>
            <person name="Feltwell T."/>
            <person name="Holroyd S."/>
            <person name="Jagels K."/>
            <person name="Karlyshev A.V."/>
            <person name="Moule S."/>
            <person name="Pallen M.J."/>
            <person name="Penn C.W."/>
            <person name="Quail M.A."/>
            <person name="Rajandream M.A."/>
            <person name="Rutherford K.M."/>
            <person name="van Vliet A.H.M."/>
            <person name="Whitehead S."/>
            <person name="Barrell B.G."/>
        </authorList>
    </citation>
    <scope>NUCLEOTIDE SEQUENCE [LARGE SCALE GENOMIC DNA]</scope>
    <source>
        <strain>ATCC 700819 / NCTC 11168</strain>
    </source>
</reference>
<gene>
    <name evidence="1" type="primary">queC</name>
    <name type="ordered locus">Cj0016</name>
</gene>
<comment type="function">
    <text evidence="1">Catalyzes the ATP-dependent conversion of 7-carboxy-7-deazaguanine (CDG) to 7-cyano-7-deazaguanine (preQ(0)).</text>
</comment>
<comment type="catalytic activity">
    <reaction evidence="1">
        <text>7-carboxy-7-deazaguanine + NH4(+) + ATP = 7-cyano-7-deazaguanine + ADP + phosphate + H2O + H(+)</text>
        <dbReference type="Rhea" id="RHEA:27982"/>
        <dbReference type="ChEBI" id="CHEBI:15377"/>
        <dbReference type="ChEBI" id="CHEBI:15378"/>
        <dbReference type="ChEBI" id="CHEBI:28938"/>
        <dbReference type="ChEBI" id="CHEBI:30616"/>
        <dbReference type="ChEBI" id="CHEBI:43474"/>
        <dbReference type="ChEBI" id="CHEBI:45075"/>
        <dbReference type="ChEBI" id="CHEBI:61036"/>
        <dbReference type="ChEBI" id="CHEBI:456216"/>
        <dbReference type="EC" id="6.3.4.20"/>
    </reaction>
</comment>
<comment type="cofactor">
    <cofactor evidence="1">
        <name>Zn(2+)</name>
        <dbReference type="ChEBI" id="CHEBI:29105"/>
    </cofactor>
    <text evidence="1">Binds 1 zinc ion per subunit.</text>
</comment>
<comment type="pathway">
    <text evidence="1">Purine metabolism; 7-cyano-7-deazaguanine biosynthesis.</text>
</comment>
<comment type="similarity">
    <text evidence="1">Belongs to the QueC family.</text>
</comment>
<sequence>MSKKALCIISGGMDSTLCAYLAKKEGYEIIALHFDYEQRTQEKEKECFKQICKALKVEKSYILDVSFIKDIGGNALTDKSIDIPKNELCTSDTPPITYVPFRNGIFLSIAGSLAEKENCESIFIGVVEEDGSGYPDCTDEFIQKAQEFINEGTSKNFKVCIKTPLVRLNKAKIVELALKENVPLELTWSCYESEDEACGECDSCLLRLRGFEKAGFKDKIKYKS</sequence>
<feature type="chain" id="PRO_0000246822" description="7-cyano-7-deazaguanine synthase">
    <location>
        <begin position="1"/>
        <end position="224"/>
    </location>
</feature>
<feature type="binding site" evidence="1">
    <location>
        <begin position="9"/>
        <end position="19"/>
    </location>
    <ligand>
        <name>ATP</name>
        <dbReference type="ChEBI" id="CHEBI:30616"/>
    </ligand>
</feature>
<feature type="binding site" evidence="1">
    <location>
        <position position="190"/>
    </location>
    <ligand>
        <name>Zn(2+)</name>
        <dbReference type="ChEBI" id="CHEBI:29105"/>
    </ligand>
</feature>
<feature type="binding site" evidence="1">
    <location>
        <position position="198"/>
    </location>
    <ligand>
        <name>Zn(2+)</name>
        <dbReference type="ChEBI" id="CHEBI:29105"/>
    </ligand>
</feature>
<feature type="binding site" evidence="1">
    <location>
        <position position="201"/>
    </location>
    <ligand>
        <name>Zn(2+)</name>
        <dbReference type="ChEBI" id="CHEBI:29105"/>
    </ligand>
</feature>
<feature type="binding site" evidence="1">
    <location>
        <position position="204"/>
    </location>
    <ligand>
        <name>Zn(2+)</name>
        <dbReference type="ChEBI" id="CHEBI:29105"/>
    </ligand>
</feature>
<protein>
    <recommendedName>
        <fullName evidence="1">7-cyano-7-deazaguanine synthase</fullName>
        <ecNumber evidence="1">6.3.4.20</ecNumber>
    </recommendedName>
    <alternativeName>
        <fullName evidence="1">7-cyano-7-carbaguanine synthase</fullName>
    </alternativeName>
    <alternativeName>
        <fullName evidence="1">PreQ(0) synthase</fullName>
    </alternativeName>
    <alternativeName>
        <fullName evidence="1">Queuosine biosynthesis protein QueC</fullName>
    </alternativeName>
</protein>